<name>PA2HC_OXYSC</name>
<feature type="chain" id="PRO_0000420858" description="Neutral phospholipase A2 homolog taipoxin beta chain 2">
    <location>
        <begin position="1"/>
        <end position="118"/>
    </location>
</feature>
<feature type="disulfide bond" evidence="1">
    <location>
        <begin position="11"/>
        <end position="71"/>
    </location>
</feature>
<feature type="disulfide bond" evidence="1">
    <location>
        <begin position="27"/>
        <end position="117"/>
    </location>
</feature>
<feature type="disulfide bond" evidence="1">
    <location>
        <begin position="29"/>
        <end position="45"/>
    </location>
</feature>
<feature type="disulfide bond" evidence="1">
    <location>
        <begin position="44"/>
        <end position="98"/>
    </location>
</feature>
<feature type="disulfide bond" evidence="1">
    <location>
        <begin position="51"/>
        <end position="91"/>
    </location>
</feature>
<feature type="disulfide bond" evidence="1">
    <location>
        <begin position="60"/>
        <end position="84"/>
    </location>
</feature>
<feature type="disulfide bond" evidence="1">
    <location>
        <begin position="78"/>
        <end position="89"/>
    </location>
</feature>
<feature type="helix" evidence="4">
    <location>
        <begin position="2"/>
        <end position="12"/>
    </location>
</feature>
<feature type="turn" evidence="4">
    <location>
        <begin position="13"/>
        <end position="15"/>
    </location>
</feature>
<feature type="helix" evidence="4">
    <location>
        <begin position="19"/>
        <end position="22"/>
    </location>
</feature>
<feature type="strand" evidence="4">
    <location>
        <begin position="23"/>
        <end position="25"/>
    </location>
</feature>
<feature type="turn" evidence="4">
    <location>
        <begin position="26"/>
        <end position="28"/>
    </location>
</feature>
<feature type="strand" evidence="4">
    <location>
        <begin position="29"/>
        <end position="31"/>
    </location>
</feature>
<feature type="helix" evidence="4">
    <location>
        <begin position="40"/>
        <end position="57"/>
    </location>
</feature>
<feature type="helix" evidence="4">
    <location>
        <begin position="62"/>
        <end position="64"/>
    </location>
</feature>
<feature type="strand" evidence="4">
    <location>
        <begin position="69"/>
        <end position="71"/>
    </location>
</feature>
<feature type="strand" evidence="4">
    <location>
        <begin position="76"/>
        <end position="78"/>
    </location>
</feature>
<feature type="helix" evidence="4">
    <location>
        <begin position="83"/>
        <end position="101"/>
    </location>
</feature>
<feature type="helix" evidence="4">
    <location>
        <begin position="106"/>
        <end position="108"/>
    </location>
</feature>
<feature type="helix" evidence="4">
    <location>
        <begin position="113"/>
        <end position="116"/>
    </location>
</feature>
<accession>P0CG57</accession>
<proteinExistence type="evidence at protein level"/>
<organism>
    <name type="scientific">Oxyuranus scutellatus scutellatus</name>
    <name type="common">Australian taipan</name>
    <name type="synonym">Coastal taipan</name>
    <dbReference type="NCBI Taxonomy" id="8667"/>
    <lineage>
        <taxon>Eukaryota</taxon>
        <taxon>Metazoa</taxon>
        <taxon>Chordata</taxon>
        <taxon>Craniata</taxon>
        <taxon>Vertebrata</taxon>
        <taxon>Euteleostomi</taxon>
        <taxon>Lepidosauria</taxon>
        <taxon>Squamata</taxon>
        <taxon>Bifurcata</taxon>
        <taxon>Unidentata</taxon>
        <taxon>Episquamata</taxon>
        <taxon>Toxicofera</taxon>
        <taxon>Serpentes</taxon>
        <taxon>Colubroidea</taxon>
        <taxon>Elapidae</taxon>
        <taxon>Hydrophiinae</taxon>
        <taxon>Oxyuranus</taxon>
    </lineage>
</organism>
<comment type="function">
    <text>Heterotrimer: Snake venom phospholipase A2 (PLA2) heterotrimer that acts as a potent presynaptic neurotoxin by blocking synaptic transmission and synaptic vesicle recycling. May act by binding in a calcium-dependent fashion to neurotonal pentraxin-1 (NPTX1) and neurotonal pentraxin-2 (NPTX2), but not to neuronal pentraxin receptor (NPTXR). Also binds to taipoxin-associated calcium binding protein 49 (RCN2), a protein localized in the lumen of endoplasmic reticulum.</text>
</comment>
<comment type="function">
    <text>Monomer (beta chain): Snake venom phospholipase A2 homolog that is neither toxic nor enzymatically active. Does not bind calcium.</text>
</comment>
<comment type="subunit">
    <text evidence="2">Heterotrimer of alpha, beta, and gamma chains; non-covalently linked.</text>
</comment>
<comment type="subcellular location">
    <subcellularLocation>
        <location>Secreted</location>
    </subcellularLocation>
</comment>
<comment type="tissue specificity">
    <text>Expressed by the venom gland.</text>
</comment>
<comment type="mass spectrometry"/>
<comment type="toxic dose">
    <text evidence="2">Heterotrimer: LD(50) is 2 ug/kg by intravenous injection into mice.</text>
</comment>
<comment type="similarity">
    <text evidence="3">Belongs to the phospholipase A2 family. Group I subfamily. D49 sub-subfamily.</text>
</comment>
<protein>
    <recommendedName>
        <fullName>Neutral phospholipase A2 homolog taipoxin beta chain 2</fullName>
        <shortName>svPLA2 homolog</shortName>
    </recommendedName>
</protein>
<evidence type="ECO:0000269" key="1">
    <source>
    </source>
</evidence>
<evidence type="ECO:0000269" key="2">
    <source>
    </source>
</evidence>
<evidence type="ECO:0000305" key="3"/>
<evidence type="ECO:0007829" key="4">
    <source>
        <dbReference type="PDB" id="3VBZ"/>
    </source>
</evidence>
<dbReference type="PDB" id="3VBZ">
    <property type="method" value="X-ray"/>
    <property type="resolution" value="1.76 A"/>
    <property type="chains" value="A/B=1-118"/>
</dbReference>
<dbReference type="PDBsum" id="3VBZ"/>
<dbReference type="SMR" id="P0CG57"/>
<dbReference type="EvolutionaryTrace" id="P0CG57"/>
<dbReference type="GO" id="GO:0005576">
    <property type="term" value="C:extracellular region"/>
    <property type="evidence" value="ECO:0007669"/>
    <property type="project" value="UniProtKB-SubCell"/>
</dbReference>
<dbReference type="GO" id="GO:0005509">
    <property type="term" value="F:calcium ion binding"/>
    <property type="evidence" value="ECO:0007669"/>
    <property type="project" value="InterPro"/>
</dbReference>
<dbReference type="GO" id="GO:0047498">
    <property type="term" value="F:calcium-dependent phospholipase A2 activity"/>
    <property type="evidence" value="ECO:0007669"/>
    <property type="project" value="TreeGrafter"/>
</dbReference>
<dbReference type="GO" id="GO:0005543">
    <property type="term" value="F:phospholipid binding"/>
    <property type="evidence" value="ECO:0007669"/>
    <property type="project" value="TreeGrafter"/>
</dbReference>
<dbReference type="GO" id="GO:0050482">
    <property type="term" value="P:arachidonate secretion"/>
    <property type="evidence" value="ECO:0007669"/>
    <property type="project" value="InterPro"/>
</dbReference>
<dbReference type="GO" id="GO:0016042">
    <property type="term" value="P:lipid catabolic process"/>
    <property type="evidence" value="ECO:0007669"/>
    <property type="project" value="InterPro"/>
</dbReference>
<dbReference type="GO" id="GO:0006644">
    <property type="term" value="P:phospholipid metabolic process"/>
    <property type="evidence" value="ECO:0007669"/>
    <property type="project" value="InterPro"/>
</dbReference>
<dbReference type="CDD" id="cd00125">
    <property type="entry name" value="PLA2c"/>
    <property type="match status" value="1"/>
</dbReference>
<dbReference type="FunFam" id="1.20.90.10:FF:000007">
    <property type="entry name" value="Acidic phospholipase A2"/>
    <property type="match status" value="1"/>
</dbReference>
<dbReference type="Gene3D" id="1.20.90.10">
    <property type="entry name" value="Phospholipase A2 domain"/>
    <property type="match status" value="1"/>
</dbReference>
<dbReference type="InterPro" id="IPR001211">
    <property type="entry name" value="PLipase_A2"/>
</dbReference>
<dbReference type="InterPro" id="IPR033112">
    <property type="entry name" value="PLipase_A2_Asp_AS"/>
</dbReference>
<dbReference type="InterPro" id="IPR016090">
    <property type="entry name" value="PLipase_A2_dom"/>
</dbReference>
<dbReference type="InterPro" id="IPR036444">
    <property type="entry name" value="PLipase_A2_dom_sf"/>
</dbReference>
<dbReference type="InterPro" id="IPR033113">
    <property type="entry name" value="PLipase_A2_His_AS"/>
</dbReference>
<dbReference type="PANTHER" id="PTHR11716:SF106">
    <property type="entry name" value="PHOSPHOLIPASE A2 A2-ACTITOXIN-UCS2A-LIKE"/>
    <property type="match status" value="1"/>
</dbReference>
<dbReference type="PANTHER" id="PTHR11716">
    <property type="entry name" value="PHOSPHOLIPASE A2 FAMILY MEMBER"/>
    <property type="match status" value="1"/>
</dbReference>
<dbReference type="Pfam" id="PF00068">
    <property type="entry name" value="Phospholip_A2_1"/>
    <property type="match status" value="1"/>
</dbReference>
<dbReference type="PRINTS" id="PR00389">
    <property type="entry name" value="PHPHLIPASEA2"/>
</dbReference>
<dbReference type="SMART" id="SM00085">
    <property type="entry name" value="PA2c"/>
    <property type="match status" value="1"/>
</dbReference>
<dbReference type="SUPFAM" id="SSF48619">
    <property type="entry name" value="Phospholipase A2, PLA2"/>
    <property type="match status" value="1"/>
</dbReference>
<dbReference type="PROSITE" id="PS00119">
    <property type="entry name" value="PA2_ASP"/>
    <property type="match status" value="1"/>
</dbReference>
<dbReference type="PROSITE" id="PS00118">
    <property type="entry name" value="PA2_HIS"/>
    <property type="match status" value="1"/>
</dbReference>
<reference key="1">
    <citation type="journal article" date="2012" name="FEBS J.">
        <title>Structural analysis of trimeric phospholipase A2 neurotoxin from the Australian taipan snake venom.</title>
        <authorList>
            <person name="Cendron L."/>
            <person name="Micetic I."/>
            <person name="Polverino de Laureto P."/>
            <person name="Paoli M."/>
        </authorList>
    </citation>
    <scope>PROTEIN SEQUENCE OF 1-4</scope>
    <scope>X-RAY CRYSTALLOGRAPHY (1.76 ANGSTROMS)</scope>
    <scope>ABSENCE OF ENZYMATIC ACTIVITY OF THE BETA CHAIN</scope>
    <scope>DISULFIDE BONDS</scope>
    <scope>MASS SPECTROMETRY</scope>
    <source>
        <tissue>Venom</tissue>
    </source>
</reference>
<reference key="2">
    <citation type="journal article" date="1976" name="Eur. J. Biochem.">
        <title>Taipoxin, an extremely potent presynaptic neurotoxin from the venom of the australian snake taipan (Oxyuranus s. scutellatus). Isolation, characterization, quaternary structure and pharmacological properties.</title>
        <authorList>
            <person name="Fohlman J."/>
            <person name="Eaker D."/>
            <person name="Karlsoon E."/>
            <person name="Thesleff S."/>
        </authorList>
    </citation>
    <scope>FUNCTION</scope>
    <scope>SUBUNIT</scope>
    <scope>TOXIC DOSE</scope>
    <source>
        <tissue>Venom</tissue>
    </source>
</reference>
<reference key="3">
    <citation type="journal article" date="1995" name="J. Neurochem.">
        <title>Novel reticular calcium binding protein is purified on taipoxin columns.</title>
        <authorList>
            <person name="Dodds D."/>
            <person name="Schlimgen A.K."/>
            <person name="Lu S.Y."/>
            <person name="Perin M.S."/>
        </authorList>
    </citation>
    <scope>FUNCTION AS RCN2 BINDING PROTEIN</scope>
</reference>
<reference key="4">
    <citation type="journal article" date="2000" name="J. Biol. Chem.">
        <title>Biochemical interactions of the neuronal pentraxins. Neuronal pentraxin (NP) receptor binds to taipoxin and taipoxin-associated calcium-binding protein 49 via NP1 and NP2.</title>
        <authorList>
            <person name="Kirkpatrick L.L."/>
            <person name="Matzuk M.M."/>
            <person name="Dodds D.C."/>
            <person name="Perin M.S."/>
        </authorList>
    </citation>
    <scope>FUNCTION AS PENTRAXIN BINDING PROTEIN</scope>
</reference>
<sequence>NLVQFGFMIECAIRNRRPALDFMNYGCYCGTVGRGTPVDDLDRCCQVHDECYATAEKHGCYPSLTTYQWECRQVGNECNSKTQCEVFVCACDLAAAKCLAQEDYNPAHFNINTGERCK</sequence>
<keyword id="KW-0002">3D-structure</keyword>
<keyword id="KW-0903">Direct protein sequencing</keyword>
<keyword id="KW-1015">Disulfide bond</keyword>
<keyword id="KW-0964">Secreted</keyword>